<keyword id="KW-0143">Chaperone</keyword>
<keyword id="KW-0963">Cytoplasm</keyword>
<keyword id="KW-1185">Reference proteome</keyword>
<keyword id="KW-0690">Ribosome biogenesis</keyword>
<keyword id="KW-0698">rRNA processing</keyword>
<proteinExistence type="inferred from homology"/>
<feature type="chain" id="PRO_1000074030" description="Ribosome maturation factor RimM">
    <location>
        <begin position="1"/>
        <end position="188"/>
    </location>
</feature>
<feature type="domain" description="PRC barrel" evidence="1">
    <location>
        <begin position="93"/>
        <end position="175"/>
    </location>
</feature>
<feature type="sequence conflict" description="In Ref. 2; ACI53004." evidence="2" ref="2">
    <original>T</original>
    <variation>I</variation>
    <location>
        <position position="40"/>
    </location>
</feature>
<feature type="sequence conflict" description="In Ref. 2; ACI53004." evidence="2" ref="2">
    <original>P</original>
    <variation>A</variation>
    <location>
        <position position="66"/>
    </location>
</feature>
<evidence type="ECO:0000255" key="1">
    <source>
        <dbReference type="HAMAP-Rule" id="MF_00014"/>
    </source>
</evidence>
<evidence type="ECO:0000305" key="2"/>
<sequence length="188" mass="20116">MDRERILMGVVGRPHGVRGLVRVHSYAAVPEDLTAYGALTDEHGQVWSLRWRGDGIAELRDAAGQPLSGRDAAQAMVNRRLYVARTSLPEPDQDEFYFTDLIGMDVRAQGTDAPLGRVLVVHDYGAGVSLELGGQGHAPLILPFTRACFPVVDVAAGRIEAVLPDEIEVQGDLSDKGEVEVSATGGAS</sequence>
<accession>A9HS64</accession>
<accession>B5ZL62</accession>
<reference key="1">
    <citation type="journal article" date="2009" name="BMC Genomics">
        <title>Complete genome sequence of the sugarcane nitrogen-fixing endophyte Gluconacetobacter diazotrophicus Pal5.</title>
        <authorList>
            <person name="Bertalan M."/>
            <person name="Albano R."/>
            <person name="de Padua V."/>
            <person name="Rouws L."/>
            <person name="Rojas C."/>
            <person name="Hemerly A."/>
            <person name="Teixeira K."/>
            <person name="Schwab S."/>
            <person name="Araujo J."/>
            <person name="Oliveira A."/>
            <person name="Franca L."/>
            <person name="Magalhaes V."/>
            <person name="Alqueres S."/>
            <person name="Cardoso A."/>
            <person name="Almeida W."/>
            <person name="Loureiro M.M."/>
            <person name="Nogueira E."/>
            <person name="Cidade D."/>
            <person name="Oliveira D."/>
            <person name="Simao T."/>
            <person name="Macedo J."/>
            <person name="Valadao A."/>
            <person name="Dreschsel M."/>
            <person name="Freitas F."/>
            <person name="Vidal M."/>
            <person name="Guedes H."/>
            <person name="Rodrigues E."/>
            <person name="Meneses C."/>
            <person name="Brioso P."/>
            <person name="Pozzer L."/>
            <person name="Figueiredo D."/>
            <person name="Montano H."/>
            <person name="Junior J."/>
            <person name="de Souza Filho G."/>
            <person name="Martin Quintana Flores V."/>
            <person name="Ferreira B."/>
            <person name="Branco A."/>
            <person name="Gonzalez P."/>
            <person name="Guillobel H."/>
            <person name="Lemos M."/>
            <person name="Seibel L."/>
            <person name="Macedo J."/>
            <person name="Alves-Ferreira M."/>
            <person name="Sachetto-Martins G."/>
            <person name="Coelho A."/>
            <person name="Santos E."/>
            <person name="Amaral G."/>
            <person name="Neves A."/>
            <person name="Pacheco A.B."/>
            <person name="Carvalho D."/>
            <person name="Lery L."/>
            <person name="Bisch P."/>
            <person name="Rossle S.C."/>
            <person name="Urmenyi T."/>
            <person name="Rael Pereira A."/>
            <person name="Silva R."/>
            <person name="Rondinelli E."/>
            <person name="von Kruger W."/>
            <person name="Martins O."/>
            <person name="Baldani J.I."/>
            <person name="Ferreira P.C."/>
        </authorList>
    </citation>
    <scope>NUCLEOTIDE SEQUENCE [LARGE SCALE GENOMIC DNA]</scope>
    <source>
        <strain>ATCC 49037 / DSM 5601 / CCUG 37298 / CIP 103539 / LMG 7603 / PAl5</strain>
    </source>
</reference>
<reference key="2">
    <citation type="journal article" date="2010" name="Stand. Genomic Sci.">
        <title>Two genome sequences of the same bacterial strain, Gluconacetobacter diazotrophicus PAl 5, suggest a new standard in genome sequence submission.</title>
        <authorList>
            <person name="Giongo A."/>
            <person name="Tyler H.L."/>
            <person name="Zipperer U.N."/>
            <person name="Triplett E.W."/>
        </authorList>
    </citation>
    <scope>NUCLEOTIDE SEQUENCE [LARGE SCALE GENOMIC DNA]</scope>
    <source>
        <strain>ATCC 49037 / DSM 5601 / CCUG 37298 / CIP 103539 / LMG 7603 / PAl5</strain>
    </source>
</reference>
<name>RIMM_GLUDA</name>
<gene>
    <name evidence="1" type="primary">rimM</name>
    <name type="ordered locus">GDI3090</name>
    <name type="ordered locus">Gdia_3277</name>
</gene>
<dbReference type="EMBL" id="AM889285">
    <property type="protein sequence ID" value="CAP57033.1"/>
    <property type="molecule type" value="Genomic_DNA"/>
</dbReference>
<dbReference type="EMBL" id="CP001189">
    <property type="protein sequence ID" value="ACI53004.1"/>
    <property type="molecule type" value="Genomic_DNA"/>
</dbReference>
<dbReference type="RefSeq" id="WP_012227446.1">
    <property type="nucleotide sequence ID" value="NC_010125.1"/>
</dbReference>
<dbReference type="RefSeq" id="WP_012554862.1">
    <property type="nucleotide sequence ID" value="NC_011365.1"/>
</dbReference>
<dbReference type="SMR" id="A9HS64"/>
<dbReference type="STRING" id="272568.GDI3090"/>
<dbReference type="KEGG" id="gdi:GDI3090"/>
<dbReference type="KEGG" id="gdj:Gdia_3277"/>
<dbReference type="eggNOG" id="COG0806">
    <property type="taxonomic scope" value="Bacteria"/>
</dbReference>
<dbReference type="HOGENOM" id="CLU_077636_0_1_5"/>
<dbReference type="OrthoDB" id="9788191at2"/>
<dbReference type="Proteomes" id="UP000001176">
    <property type="component" value="Chromosome"/>
</dbReference>
<dbReference type="GO" id="GO:0005737">
    <property type="term" value="C:cytoplasm"/>
    <property type="evidence" value="ECO:0007669"/>
    <property type="project" value="UniProtKB-SubCell"/>
</dbReference>
<dbReference type="GO" id="GO:0005840">
    <property type="term" value="C:ribosome"/>
    <property type="evidence" value="ECO:0007669"/>
    <property type="project" value="InterPro"/>
</dbReference>
<dbReference type="GO" id="GO:0043022">
    <property type="term" value="F:ribosome binding"/>
    <property type="evidence" value="ECO:0007669"/>
    <property type="project" value="InterPro"/>
</dbReference>
<dbReference type="GO" id="GO:0042274">
    <property type="term" value="P:ribosomal small subunit biogenesis"/>
    <property type="evidence" value="ECO:0007669"/>
    <property type="project" value="UniProtKB-UniRule"/>
</dbReference>
<dbReference type="GO" id="GO:0006364">
    <property type="term" value="P:rRNA processing"/>
    <property type="evidence" value="ECO:0007669"/>
    <property type="project" value="UniProtKB-UniRule"/>
</dbReference>
<dbReference type="Gene3D" id="2.30.30.240">
    <property type="entry name" value="PRC-barrel domain"/>
    <property type="match status" value="1"/>
</dbReference>
<dbReference type="Gene3D" id="2.40.30.60">
    <property type="entry name" value="RimM"/>
    <property type="match status" value="1"/>
</dbReference>
<dbReference type="HAMAP" id="MF_00014">
    <property type="entry name" value="Ribosome_mat_RimM"/>
    <property type="match status" value="1"/>
</dbReference>
<dbReference type="InterPro" id="IPR011033">
    <property type="entry name" value="PRC_barrel-like_sf"/>
</dbReference>
<dbReference type="InterPro" id="IPR056792">
    <property type="entry name" value="PRC_RimM"/>
</dbReference>
<dbReference type="InterPro" id="IPR011961">
    <property type="entry name" value="RimM"/>
</dbReference>
<dbReference type="InterPro" id="IPR002676">
    <property type="entry name" value="RimM_N"/>
</dbReference>
<dbReference type="InterPro" id="IPR036976">
    <property type="entry name" value="RimM_N_sf"/>
</dbReference>
<dbReference type="InterPro" id="IPR009000">
    <property type="entry name" value="Transl_B-barrel_sf"/>
</dbReference>
<dbReference type="NCBIfam" id="TIGR02273">
    <property type="entry name" value="16S_RimM"/>
    <property type="match status" value="1"/>
</dbReference>
<dbReference type="PANTHER" id="PTHR33692">
    <property type="entry name" value="RIBOSOME MATURATION FACTOR RIMM"/>
    <property type="match status" value="1"/>
</dbReference>
<dbReference type="PANTHER" id="PTHR33692:SF1">
    <property type="entry name" value="RIBOSOME MATURATION FACTOR RIMM"/>
    <property type="match status" value="1"/>
</dbReference>
<dbReference type="Pfam" id="PF24986">
    <property type="entry name" value="PRC_RimM"/>
    <property type="match status" value="1"/>
</dbReference>
<dbReference type="Pfam" id="PF01782">
    <property type="entry name" value="RimM"/>
    <property type="match status" value="1"/>
</dbReference>
<dbReference type="SUPFAM" id="SSF50346">
    <property type="entry name" value="PRC-barrel domain"/>
    <property type="match status" value="1"/>
</dbReference>
<dbReference type="SUPFAM" id="SSF50447">
    <property type="entry name" value="Translation proteins"/>
    <property type="match status" value="1"/>
</dbReference>
<organism>
    <name type="scientific">Gluconacetobacter diazotrophicus (strain ATCC 49037 / DSM 5601 / CCUG 37298 / CIP 103539 / LMG 7603 / PAl5)</name>
    <dbReference type="NCBI Taxonomy" id="272568"/>
    <lineage>
        <taxon>Bacteria</taxon>
        <taxon>Pseudomonadati</taxon>
        <taxon>Pseudomonadota</taxon>
        <taxon>Alphaproteobacteria</taxon>
        <taxon>Acetobacterales</taxon>
        <taxon>Acetobacteraceae</taxon>
        <taxon>Gluconacetobacter</taxon>
    </lineage>
</organism>
<protein>
    <recommendedName>
        <fullName evidence="1">Ribosome maturation factor RimM</fullName>
    </recommendedName>
</protein>
<comment type="function">
    <text evidence="1">An accessory protein needed during the final step in the assembly of 30S ribosomal subunit, possibly for assembly of the head region. Essential for efficient processing of 16S rRNA. May be needed both before and after RbfA during the maturation of 16S rRNA. It has affinity for free ribosomal 30S subunits but not for 70S ribosomes.</text>
</comment>
<comment type="subunit">
    <text evidence="1">Binds ribosomal protein uS19.</text>
</comment>
<comment type="subcellular location">
    <subcellularLocation>
        <location evidence="1">Cytoplasm</location>
    </subcellularLocation>
</comment>
<comment type="domain">
    <text evidence="1">The PRC barrel domain binds ribosomal protein uS19.</text>
</comment>
<comment type="similarity">
    <text evidence="1">Belongs to the RimM family.</text>
</comment>